<evidence type="ECO:0000255" key="1">
    <source>
        <dbReference type="HAMAP-Rule" id="MF_00102"/>
    </source>
</evidence>
<evidence type="ECO:0000305" key="2"/>
<gene>
    <name evidence="1" type="primary">dapB</name>
    <name type="ordered locus">Wbm0177</name>
</gene>
<sequence>MKIKVGVIGCSGRMGKRILNELITNTQVEIAGAVARLGSKYIGSDIGSAVYHSSNLGIKVTSSISDVFESSDVVIDFTTKECMLACLKAAMKFKTPLVSGTTGIESINLKKYAAKIPILWSANMSVGVNVLLKLVKKAAEFLDNEYDVEIWEMHHNLKKDSPSGTAMEFGKAIANALKVDFQPYQHSHNSSNIREKGKIGFAVSRGGGVVGDHSVMFINSDERIELNHKAIDRTTFARGAVRAAIWLYENKRETPGLYSMQDVI</sequence>
<protein>
    <recommendedName>
        <fullName evidence="1">4-hydroxy-tetrahydrodipicolinate reductase</fullName>
        <shortName evidence="1">HTPA reductase</shortName>
        <ecNumber evidence="1">1.17.1.8</ecNumber>
    </recommendedName>
</protein>
<name>DAPB_WOLTR</name>
<keyword id="KW-0028">Amino-acid biosynthesis</keyword>
<keyword id="KW-0963">Cytoplasm</keyword>
<keyword id="KW-0220">Diaminopimelate biosynthesis</keyword>
<keyword id="KW-0457">Lysine biosynthesis</keyword>
<keyword id="KW-0520">NAD</keyword>
<keyword id="KW-0521">NADP</keyword>
<keyword id="KW-0560">Oxidoreductase</keyword>
<keyword id="KW-1185">Reference proteome</keyword>
<comment type="function">
    <text evidence="1">Catalyzes the conversion of 4-hydroxy-tetrahydrodipicolinate (HTPA) to tetrahydrodipicolinate.</text>
</comment>
<comment type="catalytic activity">
    <reaction evidence="1">
        <text>(S)-2,3,4,5-tetrahydrodipicolinate + NAD(+) + H2O = (2S,4S)-4-hydroxy-2,3,4,5-tetrahydrodipicolinate + NADH + H(+)</text>
        <dbReference type="Rhea" id="RHEA:35323"/>
        <dbReference type="ChEBI" id="CHEBI:15377"/>
        <dbReference type="ChEBI" id="CHEBI:15378"/>
        <dbReference type="ChEBI" id="CHEBI:16845"/>
        <dbReference type="ChEBI" id="CHEBI:57540"/>
        <dbReference type="ChEBI" id="CHEBI:57945"/>
        <dbReference type="ChEBI" id="CHEBI:67139"/>
        <dbReference type="EC" id="1.17.1.8"/>
    </reaction>
</comment>
<comment type="catalytic activity">
    <reaction evidence="1">
        <text>(S)-2,3,4,5-tetrahydrodipicolinate + NADP(+) + H2O = (2S,4S)-4-hydroxy-2,3,4,5-tetrahydrodipicolinate + NADPH + H(+)</text>
        <dbReference type="Rhea" id="RHEA:35331"/>
        <dbReference type="ChEBI" id="CHEBI:15377"/>
        <dbReference type="ChEBI" id="CHEBI:15378"/>
        <dbReference type="ChEBI" id="CHEBI:16845"/>
        <dbReference type="ChEBI" id="CHEBI:57783"/>
        <dbReference type="ChEBI" id="CHEBI:58349"/>
        <dbReference type="ChEBI" id="CHEBI:67139"/>
        <dbReference type="EC" id="1.17.1.8"/>
    </reaction>
</comment>
<comment type="pathway">
    <text evidence="1">Amino-acid biosynthesis; L-lysine biosynthesis via DAP pathway; (S)-tetrahydrodipicolinate from L-aspartate: step 4/4.</text>
</comment>
<comment type="subcellular location">
    <subcellularLocation>
        <location evidence="1">Cytoplasm</location>
    </subcellularLocation>
</comment>
<comment type="similarity">
    <text evidence="1">Belongs to the DapB family.</text>
</comment>
<comment type="caution">
    <text evidence="2">Was originally thought to be a dihydrodipicolinate reductase (DHDPR), catalyzing the conversion of dihydrodipicolinate to tetrahydrodipicolinate. However, it was shown in E.coli that the substrate of the enzymatic reaction is not dihydrodipicolinate (DHDP) but in fact (2S,4S)-4-hydroxy-2,3,4,5-tetrahydrodipicolinic acid (HTPA), the product released by the DapA-catalyzed reaction.</text>
</comment>
<feature type="chain" id="PRO_0000228401" description="4-hydroxy-tetrahydrodipicolinate reductase">
    <location>
        <begin position="1"/>
        <end position="264"/>
    </location>
</feature>
<feature type="active site" description="Proton donor/acceptor" evidence="1">
    <location>
        <position position="154"/>
    </location>
</feature>
<feature type="active site" description="Proton donor" evidence="1">
    <location>
        <position position="158"/>
    </location>
</feature>
<feature type="binding site" evidence="1">
    <location>
        <begin position="9"/>
        <end position="14"/>
    </location>
    <ligand>
        <name>NAD(+)</name>
        <dbReference type="ChEBI" id="CHEBI:57540"/>
    </ligand>
</feature>
<feature type="binding site" evidence="1">
    <location>
        <position position="36"/>
    </location>
    <ligand>
        <name>NADP(+)</name>
        <dbReference type="ChEBI" id="CHEBI:58349"/>
    </ligand>
</feature>
<feature type="binding site" evidence="1">
    <location>
        <begin position="100"/>
        <end position="102"/>
    </location>
    <ligand>
        <name>NAD(+)</name>
        <dbReference type="ChEBI" id="CHEBI:57540"/>
    </ligand>
</feature>
<feature type="binding site" evidence="1">
    <location>
        <begin position="121"/>
        <end position="124"/>
    </location>
    <ligand>
        <name>NAD(+)</name>
        <dbReference type="ChEBI" id="CHEBI:57540"/>
    </ligand>
</feature>
<feature type="binding site" evidence="1">
    <location>
        <position position="155"/>
    </location>
    <ligand>
        <name>(S)-2,3,4,5-tetrahydrodipicolinate</name>
        <dbReference type="ChEBI" id="CHEBI:16845"/>
    </ligand>
</feature>
<feature type="binding site" evidence="1">
    <location>
        <begin position="164"/>
        <end position="165"/>
    </location>
    <ligand>
        <name>(S)-2,3,4,5-tetrahydrodipicolinate</name>
        <dbReference type="ChEBI" id="CHEBI:16845"/>
    </ligand>
</feature>
<proteinExistence type="inferred from homology"/>
<reference key="1">
    <citation type="journal article" date="2005" name="PLoS Biol.">
        <title>The Wolbachia genome of Brugia malayi: endosymbiont evolution within a human pathogenic nematode.</title>
        <authorList>
            <person name="Foster J."/>
            <person name="Ganatra M."/>
            <person name="Kamal I."/>
            <person name="Ware J."/>
            <person name="Makarova K."/>
            <person name="Ivanova N."/>
            <person name="Bhattacharyya A."/>
            <person name="Kapatral V."/>
            <person name="Kumar S."/>
            <person name="Posfai J."/>
            <person name="Vincze T."/>
            <person name="Ingram J."/>
            <person name="Moran L."/>
            <person name="Lapidus A."/>
            <person name="Omelchenko M."/>
            <person name="Kyrpides N."/>
            <person name="Ghedin E."/>
            <person name="Wang S."/>
            <person name="Goltsman E."/>
            <person name="Joukov V."/>
            <person name="Ostrovskaya O."/>
            <person name="Tsukerman K."/>
            <person name="Mazur M."/>
            <person name="Comb D."/>
            <person name="Koonin E."/>
            <person name="Slatko B."/>
        </authorList>
    </citation>
    <scope>NUCLEOTIDE SEQUENCE [LARGE SCALE GENOMIC DNA]</scope>
    <source>
        <strain>TRS</strain>
    </source>
</reference>
<dbReference type="EC" id="1.17.1.8" evidence="1"/>
<dbReference type="EMBL" id="AE017321">
    <property type="protein sequence ID" value="AAW70768.1"/>
    <property type="molecule type" value="Genomic_DNA"/>
</dbReference>
<dbReference type="RefSeq" id="WP_011256378.1">
    <property type="nucleotide sequence ID" value="NC_006833.1"/>
</dbReference>
<dbReference type="SMR" id="Q5GTA6"/>
<dbReference type="STRING" id="292805.Wbm0177"/>
<dbReference type="KEGG" id="wbm:Wbm0177"/>
<dbReference type="eggNOG" id="COG0289">
    <property type="taxonomic scope" value="Bacteria"/>
</dbReference>
<dbReference type="HOGENOM" id="CLU_047479_2_1_5"/>
<dbReference type="UniPathway" id="UPA00034">
    <property type="reaction ID" value="UER00018"/>
</dbReference>
<dbReference type="Proteomes" id="UP000000534">
    <property type="component" value="Chromosome"/>
</dbReference>
<dbReference type="GO" id="GO:0005737">
    <property type="term" value="C:cytoplasm"/>
    <property type="evidence" value="ECO:0007669"/>
    <property type="project" value="UniProtKB-SubCell"/>
</dbReference>
<dbReference type="GO" id="GO:0008839">
    <property type="term" value="F:4-hydroxy-tetrahydrodipicolinate reductase"/>
    <property type="evidence" value="ECO:0007669"/>
    <property type="project" value="UniProtKB-EC"/>
</dbReference>
<dbReference type="GO" id="GO:0051287">
    <property type="term" value="F:NAD binding"/>
    <property type="evidence" value="ECO:0007669"/>
    <property type="project" value="UniProtKB-UniRule"/>
</dbReference>
<dbReference type="GO" id="GO:0050661">
    <property type="term" value="F:NADP binding"/>
    <property type="evidence" value="ECO:0007669"/>
    <property type="project" value="UniProtKB-UniRule"/>
</dbReference>
<dbReference type="GO" id="GO:0016726">
    <property type="term" value="F:oxidoreductase activity, acting on CH or CH2 groups, NAD or NADP as acceptor"/>
    <property type="evidence" value="ECO:0007669"/>
    <property type="project" value="UniProtKB-UniRule"/>
</dbReference>
<dbReference type="GO" id="GO:0019877">
    <property type="term" value="P:diaminopimelate biosynthetic process"/>
    <property type="evidence" value="ECO:0007669"/>
    <property type="project" value="UniProtKB-UniRule"/>
</dbReference>
<dbReference type="GO" id="GO:0009089">
    <property type="term" value="P:lysine biosynthetic process via diaminopimelate"/>
    <property type="evidence" value="ECO:0007669"/>
    <property type="project" value="UniProtKB-UniRule"/>
</dbReference>
<dbReference type="CDD" id="cd02274">
    <property type="entry name" value="DHDPR_N"/>
    <property type="match status" value="1"/>
</dbReference>
<dbReference type="Gene3D" id="3.30.360.10">
    <property type="entry name" value="Dihydrodipicolinate Reductase, domain 2"/>
    <property type="match status" value="1"/>
</dbReference>
<dbReference type="Gene3D" id="3.40.50.720">
    <property type="entry name" value="NAD(P)-binding Rossmann-like Domain"/>
    <property type="match status" value="1"/>
</dbReference>
<dbReference type="HAMAP" id="MF_00102">
    <property type="entry name" value="DapB"/>
    <property type="match status" value="1"/>
</dbReference>
<dbReference type="InterPro" id="IPR022663">
    <property type="entry name" value="DapB_C"/>
</dbReference>
<dbReference type="InterPro" id="IPR000846">
    <property type="entry name" value="DapB_N"/>
</dbReference>
<dbReference type="InterPro" id="IPR022664">
    <property type="entry name" value="DapB_N_CS"/>
</dbReference>
<dbReference type="InterPro" id="IPR023940">
    <property type="entry name" value="DHDPR_bac"/>
</dbReference>
<dbReference type="InterPro" id="IPR036291">
    <property type="entry name" value="NAD(P)-bd_dom_sf"/>
</dbReference>
<dbReference type="NCBIfam" id="TIGR00036">
    <property type="entry name" value="dapB"/>
    <property type="match status" value="1"/>
</dbReference>
<dbReference type="PANTHER" id="PTHR20836:SF0">
    <property type="entry name" value="4-HYDROXY-TETRAHYDRODIPICOLINATE REDUCTASE 1, CHLOROPLASTIC-RELATED"/>
    <property type="match status" value="1"/>
</dbReference>
<dbReference type="PANTHER" id="PTHR20836">
    <property type="entry name" value="DIHYDRODIPICOLINATE REDUCTASE"/>
    <property type="match status" value="1"/>
</dbReference>
<dbReference type="Pfam" id="PF05173">
    <property type="entry name" value="DapB_C"/>
    <property type="match status" value="1"/>
</dbReference>
<dbReference type="Pfam" id="PF01113">
    <property type="entry name" value="DapB_N"/>
    <property type="match status" value="1"/>
</dbReference>
<dbReference type="PIRSF" id="PIRSF000161">
    <property type="entry name" value="DHPR"/>
    <property type="match status" value="1"/>
</dbReference>
<dbReference type="SUPFAM" id="SSF55347">
    <property type="entry name" value="Glyceraldehyde-3-phosphate dehydrogenase-like, C-terminal domain"/>
    <property type="match status" value="1"/>
</dbReference>
<dbReference type="SUPFAM" id="SSF51735">
    <property type="entry name" value="NAD(P)-binding Rossmann-fold domains"/>
    <property type="match status" value="1"/>
</dbReference>
<dbReference type="PROSITE" id="PS01298">
    <property type="entry name" value="DAPB"/>
    <property type="match status" value="1"/>
</dbReference>
<organism>
    <name type="scientific">Wolbachia sp. subsp. Brugia malayi (strain TRS)</name>
    <dbReference type="NCBI Taxonomy" id="292805"/>
    <lineage>
        <taxon>Bacteria</taxon>
        <taxon>Pseudomonadati</taxon>
        <taxon>Pseudomonadota</taxon>
        <taxon>Alphaproteobacteria</taxon>
        <taxon>Rickettsiales</taxon>
        <taxon>Anaplasmataceae</taxon>
        <taxon>Wolbachieae</taxon>
        <taxon>Wolbachia</taxon>
    </lineage>
</organism>
<accession>Q5GTA6</accession>